<name>LIPB_SHEDO</name>
<feature type="chain" id="PRO_0000321668" description="Octanoyltransferase">
    <location>
        <begin position="1"/>
        <end position="227"/>
    </location>
</feature>
<feature type="domain" description="BPL/LPL catalytic" evidence="2">
    <location>
        <begin position="43"/>
        <end position="218"/>
    </location>
</feature>
<feature type="active site" description="Acyl-thioester intermediate" evidence="1">
    <location>
        <position position="180"/>
    </location>
</feature>
<feature type="binding site" evidence="1">
    <location>
        <begin position="82"/>
        <end position="89"/>
    </location>
    <ligand>
        <name>substrate</name>
    </ligand>
</feature>
<feature type="binding site" evidence="1">
    <location>
        <begin position="149"/>
        <end position="151"/>
    </location>
    <ligand>
        <name>substrate</name>
    </ligand>
</feature>
<feature type="binding site" evidence="1">
    <location>
        <begin position="162"/>
        <end position="164"/>
    </location>
    <ligand>
        <name>substrate</name>
    </ligand>
</feature>
<feature type="site" description="Lowers pKa of active site Cys" evidence="1">
    <location>
        <position position="146"/>
    </location>
</feature>
<keyword id="KW-0012">Acyltransferase</keyword>
<keyword id="KW-0963">Cytoplasm</keyword>
<keyword id="KW-1185">Reference proteome</keyword>
<keyword id="KW-0808">Transferase</keyword>
<proteinExistence type="inferred from homology"/>
<gene>
    <name evidence="1" type="primary">lipB</name>
    <name type="ordered locus">Sden_0868</name>
</gene>
<comment type="function">
    <text evidence="1">Catalyzes the transfer of endogenously produced octanoic acid from octanoyl-acyl-carrier-protein onto the lipoyl domains of lipoate-dependent enzymes. Lipoyl-ACP can also act as a substrate although octanoyl-ACP is likely to be the physiological substrate.</text>
</comment>
<comment type="catalytic activity">
    <reaction evidence="1">
        <text>octanoyl-[ACP] + L-lysyl-[protein] = N(6)-octanoyl-L-lysyl-[protein] + holo-[ACP] + H(+)</text>
        <dbReference type="Rhea" id="RHEA:17665"/>
        <dbReference type="Rhea" id="RHEA-COMP:9636"/>
        <dbReference type="Rhea" id="RHEA-COMP:9685"/>
        <dbReference type="Rhea" id="RHEA-COMP:9752"/>
        <dbReference type="Rhea" id="RHEA-COMP:9928"/>
        <dbReference type="ChEBI" id="CHEBI:15378"/>
        <dbReference type="ChEBI" id="CHEBI:29969"/>
        <dbReference type="ChEBI" id="CHEBI:64479"/>
        <dbReference type="ChEBI" id="CHEBI:78463"/>
        <dbReference type="ChEBI" id="CHEBI:78809"/>
        <dbReference type="EC" id="2.3.1.181"/>
    </reaction>
</comment>
<comment type="pathway">
    <text evidence="1">Protein modification; protein lipoylation via endogenous pathway; protein N(6)-(lipoyl)lysine from octanoyl-[acyl-carrier-protein]: step 1/2.</text>
</comment>
<comment type="subcellular location">
    <subcellularLocation>
        <location evidence="1">Cytoplasm</location>
    </subcellularLocation>
</comment>
<comment type="miscellaneous">
    <text evidence="1">In the reaction, the free carboxyl group of octanoic acid is attached via an amide linkage to the epsilon-amino group of a specific lysine residue of lipoyl domains of lipoate-dependent enzymes.</text>
</comment>
<comment type="similarity">
    <text evidence="1">Belongs to the LipB family.</text>
</comment>
<organism>
    <name type="scientific">Shewanella denitrificans (strain OS217 / ATCC BAA-1090 / DSM 15013)</name>
    <dbReference type="NCBI Taxonomy" id="318161"/>
    <lineage>
        <taxon>Bacteria</taxon>
        <taxon>Pseudomonadati</taxon>
        <taxon>Pseudomonadota</taxon>
        <taxon>Gammaproteobacteria</taxon>
        <taxon>Alteromonadales</taxon>
        <taxon>Shewanellaceae</taxon>
        <taxon>Shewanella</taxon>
    </lineage>
</organism>
<reference key="1">
    <citation type="submission" date="2006-03" db="EMBL/GenBank/DDBJ databases">
        <title>Complete sequence of Shewanella denitrificans OS217.</title>
        <authorList>
            <consortium name="US DOE Joint Genome Institute"/>
            <person name="Copeland A."/>
            <person name="Lucas S."/>
            <person name="Lapidus A."/>
            <person name="Barry K."/>
            <person name="Detter J.C."/>
            <person name="Glavina del Rio T."/>
            <person name="Hammon N."/>
            <person name="Israni S."/>
            <person name="Dalin E."/>
            <person name="Tice H."/>
            <person name="Pitluck S."/>
            <person name="Brettin T."/>
            <person name="Bruce D."/>
            <person name="Han C."/>
            <person name="Tapia R."/>
            <person name="Gilna P."/>
            <person name="Kiss H."/>
            <person name="Schmutz J."/>
            <person name="Larimer F."/>
            <person name="Land M."/>
            <person name="Hauser L."/>
            <person name="Kyrpides N."/>
            <person name="Lykidis A."/>
            <person name="Richardson P."/>
        </authorList>
    </citation>
    <scope>NUCLEOTIDE SEQUENCE [LARGE SCALE GENOMIC DNA]</scope>
    <source>
        <strain>OS217 / ATCC BAA-1090 / DSM 15013</strain>
    </source>
</reference>
<evidence type="ECO:0000255" key="1">
    <source>
        <dbReference type="HAMAP-Rule" id="MF_00013"/>
    </source>
</evidence>
<evidence type="ECO:0000255" key="2">
    <source>
        <dbReference type="PROSITE-ProRule" id="PRU01067"/>
    </source>
</evidence>
<sequence length="227" mass="25241">MSQLFYKGEALLLPQTLHIRHLGQQDYQTVWHAMQAYTDNRGADSQDELWIVEHTPVFTQGQAGKSEHILNPGDIPVIQVDRGGQVTYHGPGQLVAYPLIDIKRAKLGVRQLVNHIEQSIIDMLSPYDIKAYAKTDAPGVYVDERKIASLGLRIRKGCSFHGLALNVDMDLAPFRRINPCGYAGLEMVQSKALNGPQSVVEAGDKLIDTFTKTLGYQEVIHHQGLAE</sequence>
<accession>Q12QX0</accession>
<dbReference type="EC" id="2.3.1.181" evidence="1"/>
<dbReference type="EMBL" id="CP000302">
    <property type="protein sequence ID" value="ABE54156.1"/>
    <property type="molecule type" value="Genomic_DNA"/>
</dbReference>
<dbReference type="SMR" id="Q12QX0"/>
<dbReference type="STRING" id="318161.Sden_0868"/>
<dbReference type="KEGG" id="sdn:Sden_0868"/>
<dbReference type="eggNOG" id="COG0321">
    <property type="taxonomic scope" value="Bacteria"/>
</dbReference>
<dbReference type="HOGENOM" id="CLU_035168_3_1_6"/>
<dbReference type="UniPathway" id="UPA00538">
    <property type="reaction ID" value="UER00592"/>
</dbReference>
<dbReference type="Proteomes" id="UP000001982">
    <property type="component" value="Chromosome"/>
</dbReference>
<dbReference type="GO" id="GO:0005737">
    <property type="term" value="C:cytoplasm"/>
    <property type="evidence" value="ECO:0007669"/>
    <property type="project" value="UniProtKB-SubCell"/>
</dbReference>
<dbReference type="GO" id="GO:0033819">
    <property type="term" value="F:lipoyl(octanoyl) transferase activity"/>
    <property type="evidence" value="ECO:0007669"/>
    <property type="project" value="UniProtKB-EC"/>
</dbReference>
<dbReference type="GO" id="GO:0036211">
    <property type="term" value="P:protein modification process"/>
    <property type="evidence" value="ECO:0007669"/>
    <property type="project" value="InterPro"/>
</dbReference>
<dbReference type="CDD" id="cd16444">
    <property type="entry name" value="LipB"/>
    <property type="match status" value="1"/>
</dbReference>
<dbReference type="FunFam" id="3.30.930.10:FF:000020">
    <property type="entry name" value="Octanoyltransferase"/>
    <property type="match status" value="1"/>
</dbReference>
<dbReference type="Gene3D" id="3.30.930.10">
    <property type="entry name" value="Bira Bifunctional Protein, Domain 2"/>
    <property type="match status" value="1"/>
</dbReference>
<dbReference type="HAMAP" id="MF_00013">
    <property type="entry name" value="LipB"/>
    <property type="match status" value="1"/>
</dbReference>
<dbReference type="InterPro" id="IPR045864">
    <property type="entry name" value="aa-tRNA-synth_II/BPL/LPL"/>
</dbReference>
<dbReference type="InterPro" id="IPR004143">
    <property type="entry name" value="BPL_LPL_catalytic"/>
</dbReference>
<dbReference type="InterPro" id="IPR000544">
    <property type="entry name" value="Octanoyltransferase"/>
</dbReference>
<dbReference type="InterPro" id="IPR020605">
    <property type="entry name" value="Octanoyltransferase_CS"/>
</dbReference>
<dbReference type="NCBIfam" id="TIGR00214">
    <property type="entry name" value="lipB"/>
    <property type="match status" value="1"/>
</dbReference>
<dbReference type="NCBIfam" id="NF010922">
    <property type="entry name" value="PRK14342.1"/>
    <property type="match status" value="1"/>
</dbReference>
<dbReference type="PANTHER" id="PTHR10993:SF7">
    <property type="entry name" value="LIPOYLTRANSFERASE 2, MITOCHONDRIAL-RELATED"/>
    <property type="match status" value="1"/>
</dbReference>
<dbReference type="PANTHER" id="PTHR10993">
    <property type="entry name" value="OCTANOYLTRANSFERASE"/>
    <property type="match status" value="1"/>
</dbReference>
<dbReference type="Pfam" id="PF21948">
    <property type="entry name" value="LplA-B_cat"/>
    <property type="match status" value="1"/>
</dbReference>
<dbReference type="PIRSF" id="PIRSF016262">
    <property type="entry name" value="LPLase"/>
    <property type="match status" value="1"/>
</dbReference>
<dbReference type="SUPFAM" id="SSF55681">
    <property type="entry name" value="Class II aaRS and biotin synthetases"/>
    <property type="match status" value="1"/>
</dbReference>
<dbReference type="PROSITE" id="PS51733">
    <property type="entry name" value="BPL_LPL_CATALYTIC"/>
    <property type="match status" value="1"/>
</dbReference>
<dbReference type="PROSITE" id="PS01313">
    <property type="entry name" value="LIPB"/>
    <property type="match status" value="1"/>
</dbReference>
<protein>
    <recommendedName>
        <fullName evidence="1">Octanoyltransferase</fullName>
        <ecNumber evidence="1">2.3.1.181</ecNumber>
    </recommendedName>
    <alternativeName>
        <fullName evidence="1">Lipoate-protein ligase B</fullName>
    </alternativeName>
    <alternativeName>
        <fullName evidence="1">Lipoyl/octanoyl transferase</fullName>
    </alternativeName>
    <alternativeName>
        <fullName evidence="1">Octanoyl-[acyl-carrier-protein]-protein N-octanoyltransferase</fullName>
    </alternativeName>
</protein>